<keyword id="KW-1185">Reference proteome</keyword>
<protein>
    <recommendedName>
        <fullName>PIH1 domain-containing protein 2</fullName>
    </recommendedName>
</protein>
<reference key="1">
    <citation type="submission" date="2004-12" db="EMBL/GenBank/DDBJ databases">
        <authorList>
            <consortium name="NIH - Zebrafish Gene Collection (ZGC) project"/>
        </authorList>
    </citation>
    <scope>NUCLEOTIDE SEQUENCE [LARGE SCALE MRNA]</scope>
    <source>
        <tissue>Olfactory epithelium</tissue>
    </source>
</reference>
<organism>
    <name type="scientific">Danio rerio</name>
    <name type="common">Zebrafish</name>
    <name type="synonym">Brachydanio rerio</name>
    <dbReference type="NCBI Taxonomy" id="7955"/>
    <lineage>
        <taxon>Eukaryota</taxon>
        <taxon>Metazoa</taxon>
        <taxon>Chordata</taxon>
        <taxon>Craniata</taxon>
        <taxon>Vertebrata</taxon>
        <taxon>Euteleostomi</taxon>
        <taxon>Actinopterygii</taxon>
        <taxon>Neopterygii</taxon>
        <taxon>Teleostei</taxon>
        <taxon>Ostariophysi</taxon>
        <taxon>Cypriniformes</taxon>
        <taxon>Danionidae</taxon>
        <taxon>Danioninae</taxon>
        <taxon>Danio</taxon>
    </lineage>
</organism>
<dbReference type="EMBL" id="BC086728">
    <property type="protein sequence ID" value="AAH86728.1"/>
    <property type="molecule type" value="mRNA"/>
</dbReference>
<dbReference type="RefSeq" id="NP_001008629.1">
    <property type="nucleotide sequence ID" value="NM_001008629.1"/>
</dbReference>
<dbReference type="SMR" id="Q5PRB3"/>
<dbReference type="FunCoup" id="Q5PRB3">
    <property type="interactions" value="449"/>
</dbReference>
<dbReference type="STRING" id="7955.ENSDARP00000017232"/>
<dbReference type="PaxDb" id="7955-ENSDARP00000017232"/>
<dbReference type="GeneID" id="494086"/>
<dbReference type="KEGG" id="dre:494086"/>
<dbReference type="AGR" id="ZFIN:ZDB-GENE-041212-54"/>
<dbReference type="CTD" id="120379"/>
<dbReference type="ZFIN" id="ZDB-GENE-041212-54">
    <property type="gene designation" value="pih1d2"/>
</dbReference>
<dbReference type="eggNOG" id="KOG4356">
    <property type="taxonomic scope" value="Eukaryota"/>
</dbReference>
<dbReference type="InParanoid" id="Q5PRB3"/>
<dbReference type="OrthoDB" id="545063at2759"/>
<dbReference type="PhylomeDB" id="Q5PRB3"/>
<dbReference type="PRO" id="PR:Q5PRB3"/>
<dbReference type="Proteomes" id="UP000000437">
    <property type="component" value="Chromosome 15"/>
</dbReference>
<dbReference type="GO" id="GO:0005737">
    <property type="term" value="C:cytoplasm"/>
    <property type="evidence" value="ECO:0000318"/>
    <property type="project" value="GO_Central"/>
</dbReference>
<dbReference type="GO" id="GO:0097255">
    <property type="term" value="C:R2TP complex"/>
    <property type="evidence" value="ECO:0000318"/>
    <property type="project" value="GO_Central"/>
</dbReference>
<dbReference type="GO" id="GO:1990904">
    <property type="term" value="C:ribonucleoprotein complex"/>
    <property type="evidence" value="ECO:0000318"/>
    <property type="project" value="GO_Central"/>
</dbReference>
<dbReference type="GO" id="GO:0070286">
    <property type="term" value="P:axonemal dynein complex assembly"/>
    <property type="evidence" value="ECO:0000315"/>
    <property type="project" value="ZFIN"/>
</dbReference>
<dbReference type="GO" id="GO:0000492">
    <property type="term" value="P:box C/D snoRNP assembly"/>
    <property type="evidence" value="ECO:0000318"/>
    <property type="project" value="GO_Central"/>
</dbReference>
<dbReference type="GO" id="GO:0006364">
    <property type="term" value="P:rRNA processing"/>
    <property type="evidence" value="ECO:0000318"/>
    <property type="project" value="GO_Central"/>
</dbReference>
<dbReference type="InterPro" id="IPR050734">
    <property type="entry name" value="PIH1/Kintoun_subfamily"/>
</dbReference>
<dbReference type="InterPro" id="IPR012981">
    <property type="entry name" value="PIH1_N"/>
</dbReference>
<dbReference type="InterPro" id="IPR041442">
    <property type="entry name" value="PIH1D1/2/3_CS-like"/>
</dbReference>
<dbReference type="PANTHER" id="PTHR22997">
    <property type="entry name" value="PIH1 DOMAIN-CONTAINING PROTEIN 1"/>
    <property type="match status" value="1"/>
</dbReference>
<dbReference type="PANTHER" id="PTHR22997:SF6">
    <property type="entry name" value="PIH1 DOMAIN-CONTAINING PROTEIN 2"/>
    <property type="match status" value="1"/>
</dbReference>
<dbReference type="Pfam" id="PF08190">
    <property type="entry name" value="PIH1"/>
    <property type="match status" value="1"/>
</dbReference>
<dbReference type="Pfam" id="PF18201">
    <property type="entry name" value="PIH1_CS"/>
    <property type="match status" value="1"/>
</dbReference>
<proteinExistence type="evidence at transcript level"/>
<name>PIHD2_DANRE</name>
<comment type="similarity">
    <text evidence="1">Belongs to the PIH1 family.</text>
</comment>
<sequence length="322" mass="36338">MAIHGYDGKAALQQVNQFWSMLDDMCENNPEEYRSFIQRQMREGAEFHSPPQSHTCIRTAVLGANEGILYINICGWKRVPAPASDKEPVPVCGGRMEKLTEEKEEYSVVDAAFNPEVLQTTEKDKEEKENLCLLALNFIQQQHNLTLSQHYKLTNDKIKGSIRDTKQRLMSTKTCKSTLNGSQSEPAPSLLQQICSLQNTESDEDSSIELSIEQERKPARSGLIEVISSTELDQPQPQLPKHQLTICPDGNGSSRILQLCVELPGVRSVSQCQLRISEDDILLEVEDIYYLLLPFPELVKEETCTAKFNKKKQTLNVTVNVL</sequence>
<evidence type="ECO:0000305" key="1"/>
<feature type="chain" id="PRO_0000307336" description="PIH1 domain-containing protein 2">
    <location>
        <begin position="1"/>
        <end position="322"/>
    </location>
</feature>
<accession>Q5PRB3</accession>
<gene>
    <name type="primary">pih1d2</name>
    <name type="ORF">zgc:101725</name>
</gene>